<comment type="function">
    <text evidence="1">One of two assembly initiator proteins, it binds directly to the 5'-end of the 23S rRNA, where it nucleates assembly of the 50S subunit.</text>
</comment>
<comment type="function">
    <text evidence="1">One of the proteins that surrounds the polypeptide exit tunnel on the outside of the subunit.</text>
</comment>
<comment type="subunit">
    <text evidence="1">Part of the 50S ribosomal subunit.</text>
</comment>
<comment type="similarity">
    <text evidence="1">Belongs to the universal ribosomal protein uL24 family.</text>
</comment>
<sequence>MSKIHVRKKDTVVVISGKDKGKIGEVLSVLPKKGKVIVKDVNVVTKHQKPNRENMQGGIIHKEAPIFSSKVMLYCDKCKSATRISNKILEDGTKVRVCKKCGETF</sequence>
<feature type="chain" id="PRO_0000355663" description="Large ribosomal subunit protein uL24">
    <location>
        <begin position="1"/>
        <end position="105"/>
    </location>
</feature>
<reference key="1">
    <citation type="journal article" date="2007" name="PLoS ONE">
        <title>Analysis of the neurotoxin complex genes in Clostridium botulinum A1-A4 and B1 strains: BoNT/A3, /Ba4 and /B1 clusters are located within plasmids.</title>
        <authorList>
            <person name="Smith T.J."/>
            <person name="Hill K.K."/>
            <person name="Foley B.T."/>
            <person name="Detter J.C."/>
            <person name="Munk A.C."/>
            <person name="Bruce D.C."/>
            <person name="Doggett N.A."/>
            <person name="Smith L.A."/>
            <person name="Marks J.D."/>
            <person name="Xie G."/>
            <person name="Brettin T.S."/>
        </authorList>
    </citation>
    <scope>NUCLEOTIDE SEQUENCE [LARGE SCALE GENOMIC DNA]</scope>
    <source>
        <strain>Okra / Type B1</strain>
    </source>
</reference>
<proteinExistence type="inferred from homology"/>
<protein>
    <recommendedName>
        <fullName evidence="1">Large ribosomal subunit protein uL24</fullName>
    </recommendedName>
    <alternativeName>
        <fullName evidence="2">50S ribosomal protein L24</fullName>
    </alternativeName>
</protein>
<accession>B1IGE3</accession>
<gene>
    <name evidence="1" type="primary">rplX</name>
    <name type="ordered locus">CLD_1035</name>
</gene>
<name>RL24_CLOBK</name>
<keyword id="KW-0687">Ribonucleoprotein</keyword>
<keyword id="KW-0689">Ribosomal protein</keyword>
<keyword id="KW-0694">RNA-binding</keyword>
<keyword id="KW-0699">rRNA-binding</keyword>
<organism>
    <name type="scientific">Clostridium botulinum (strain Okra / Type B1)</name>
    <dbReference type="NCBI Taxonomy" id="498213"/>
    <lineage>
        <taxon>Bacteria</taxon>
        <taxon>Bacillati</taxon>
        <taxon>Bacillota</taxon>
        <taxon>Clostridia</taxon>
        <taxon>Eubacteriales</taxon>
        <taxon>Clostridiaceae</taxon>
        <taxon>Clostridium</taxon>
    </lineage>
</organism>
<dbReference type="EMBL" id="CP000939">
    <property type="protein sequence ID" value="ACA46162.1"/>
    <property type="molecule type" value="Genomic_DNA"/>
</dbReference>
<dbReference type="RefSeq" id="WP_003494932.1">
    <property type="nucleotide sequence ID" value="NC_010516.1"/>
</dbReference>
<dbReference type="SMR" id="B1IGE3"/>
<dbReference type="GeneID" id="92940239"/>
<dbReference type="KEGG" id="cbb:CLD_1035"/>
<dbReference type="HOGENOM" id="CLU_093315_2_3_9"/>
<dbReference type="Proteomes" id="UP000008541">
    <property type="component" value="Chromosome"/>
</dbReference>
<dbReference type="GO" id="GO:1990904">
    <property type="term" value="C:ribonucleoprotein complex"/>
    <property type="evidence" value="ECO:0007669"/>
    <property type="project" value="UniProtKB-KW"/>
</dbReference>
<dbReference type="GO" id="GO:0005840">
    <property type="term" value="C:ribosome"/>
    <property type="evidence" value="ECO:0007669"/>
    <property type="project" value="UniProtKB-KW"/>
</dbReference>
<dbReference type="GO" id="GO:0019843">
    <property type="term" value="F:rRNA binding"/>
    <property type="evidence" value="ECO:0007669"/>
    <property type="project" value="UniProtKB-UniRule"/>
</dbReference>
<dbReference type="GO" id="GO:0003735">
    <property type="term" value="F:structural constituent of ribosome"/>
    <property type="evidence" value="ECO:0007669"/>
    <property type="project" value="InterPro"/>
</dbReference>
<dbReference type="GO" id="GO:0006412">
    <property type="term" value="P:translation"/>
    <property type="evidence" value="ECO:0007669"/>
    <property type="project" value="UniProtKB-UniRule"/>
</dbReference>
<dbReference type="CDD" id="cd06089">
    <property type="entry name" value="KOW_RPL26"/>
    <property type="match status" value="1"/>
</dbReference>
<dbReference type="FunFam" id="2.30.30.30:FF:000004">
    <property type="entry name" value="50S ribosomal protein L24"/>
    <property type="match status" value="1"/>
</dbReference>
<dbReference type="Gene3D" id="2.30.30.30">
    <property type="match status" value="1"/>
</dbReference>
<dbReference type="HAMAP" id="MF_01326_B">
    <property type="entry name" value="Ribosomal_uL24_B"/>
    <property type="match status" value="1"/>
</dbReference>
<dbReference type="InterPro" id="IPR005824">
    <property type="entry name" value="KOW"/>
</dbReference>
<dbReference type="InterPro" id="IPR014722">
    <property type="entry name" value="Rib_uL2_dom2"/>
</dbReference>
<dbReference type="InterPro" id="IPR003256">
    <property type="entry name" value="Ribosomal_uL24"/>
</dbReference>
<dbReference type="InterPro" id="IPR041988">
    <property type="entry name" value="Ribosomal_uL24_KOW"/>
</dbReference>
<dbReference type="InterPro" id="IPR008991">
    <property type="entry name" value="Translation_prot_SH3-like_sf"/>
</dbReference>
<dbReference type="NCBIfam" id="TIGR01079">
    <property type="entry name" value="rplX_bact"/>
    <property type="match status" value="1"/>
</dbReference>
<dbReference type="PANTHER" id="PTHR12903">
    <property type="entry name" value="MITOCHONDRIAL RIBOSOMAL PROTEIN L24"/>
    <property type="match status" value="1"/>
</dbReference>
<dbReference type="Pfam" id="PF00467">
    <property type="entry name" value="KOW"/>
    <property type="match status" value="1"/>
</dbReference>
<dbReference type="Pfam" id="PF17136">
    <property type="entry name" value="ribosomal_L24"/>
    <property type="match status" value="1"/>
</dbReference>
<dbReference type="SMART" id="SM00739">
    <property type="entry name" value="KOW"/>
    <property type="match status" value="1"/>
</dbReference>
<dbReference type="SUPFAM" id="SSF50104">
    <property type="entry name" value="Translation proteins SH3-like domain"/>
    <property type="match status" value="1"/>
</dbReference>
<evidence type="ECO:0000255" key="1">
    <source>
        <dbReference type="HAMAP-Rule" id="MF_01326"/>
    </source>
</evidence>
<evidence type="ECO:0000305" key="2"/>